<comment type="subcellular location">
    <subcellularLocation>
        <location evidence="2">Secreted</location>
    </subcellularLocation>
</comment>
<comment type="tissue specificity">
    <text evidence="5">Expressed by the venom gland.</text>
</comment>
<comment type="mass spectrometry">
    <text>Monoisotopic mass.</text>
</comment>
<reference key="1">
    <citation type="journal article" date="2019" name="Toxins">
        <title>Missiles of mass disruption: composition and glandular origin of venom used as a projectile defensive weapon by the assassin bug Platymeris rhadamanthus.</title>
        <authorList>
            <person name="Walker A.A."/>
            <person name="Robinson S.D."/>
            <person name="Undheim E.A.B."/>
            <person name="Jin J."/>
            <person name="Han X."/>
            <person name="Fry B.G."/>
            <person name="Vetter I."/>
            <person name="King G.F."/>
        </authorList>
    </citation>
    <scope>NUCLEOTIDE SEQUENCE [MRNA]</scope>
    <scope>MASS SPECTROMETRY</scope>
    <scope>SUBCELLULAR LOCATION</scope>
    <source>
        <tissue>Venom</tissue>
        <tissue>Venom gland</tissue>
    </source>
</reference>
<dbReference type="EMBL" id="MN208344">
    <property type="protein sequence ID" value="QHB21533.1"/>
    <property type="molecule type" value="mRNA"/>
</dbReference>
<dbReference type="GO" id="GO:0005576">
    <property type="term" value="C:extracellular region"/>
    <property type="evidence" value="ECO:0007669"/>
    <property type="project" value="UniProtKB-SubCell"/>
</dbReference>
<feature type="signal peptide" evidence="1">
    <location>
        <begin position="1"/>
        <end position="19"/>
    </location>
</feature>
<feature type="propeptide" id="PRO_0000454322" evidence="5">
    <location>
        <begin position="20"/>
        <end position="42"/>
    </location>
</feature>
<feature type="peptide" id="PRO_5025350041" description="U-reduvitoxin-Pr9a" evidence="5">
    <location>
        <begin position="43"/>
        <end position="63"/>
    </location>
</feature>
<feature type="disulfide bond" evidence="4">
    <location>
        <begin position="47"/>
        <end position="60"/>
    </location>
</feature>
<protein>
    <recommendedName>
        <fullName evidence="3">U-reduvitoxin-Pr9a</fullName>
        <shortName evidence="3">U-RDTX-Pr9a</shortName>
    </recommendedName>
    <alternativeName>
        <fullName evidence="6">Venom peptide Pr9a</fullName>
    </alternativeName>
</protein>
<name>PR9A_PLARH</name>
<organism>
    <name type="scientific">Platymeris rhadamanthus</name>
    <name type="common">Red spot assassin bug</name>
    <dbReference type="NCBI Taxonomy" id="1134088"/>
    <lineage>
        <taxon>Eukaryota</taxon>
        <taxon>Metazoa</taxon>
        <taxon>Ecdysozoa</taxon>
        <taxon>Arthropoda</taxon>
        <taxon>Hexapoda</taxon>
        <taxon>Insecta</taxon>
        <taxon>Pterygota</taxon>
        <taxon>Neoptera</taxon>
        <taxon>Paraneoptera</taxon>
        <taxon>Hemiptera</taxon>
        <taxon>Heteroptera</taxon>
        <taxon>Panheteroptera</taxon>
        <taxon>Cimicomorpha</taxon>
        <taxon>Reduviidae</taxon>
        <taxon>Platymeris</taxon>
    </lineage>
</organism>
<accession>A0A6B9L8Y4</accession>
<evidence type="ECO:0000255" key="1"/>
<evidence type="ECO:0000269" key="2">
    <source>
    </source>
</evidence>
<evidence type="ECO:0000303" key="3">
    <source>
    </source>
</evidence>
<evidence type="ECO:0000305" key="4"/>
<evidence type="ECO:0000305" key="5">
    <source>
    </source>
</evidence>
<evidence type="ECO:0000312" key="6">
    <source>
        <dbReference type="EMBL" id="QHB21533.1"/>
    </source>
</evidence>
<proteinExistence type="evidence at protein level"/>
<keyword id="KW-1015">Disulfide bond</keyword>
<keyword id="KW-0964">Secreted</keyword>
<keyword id="KW-0732">Signal</keyword>
<sequence>MRFFSLFTFLVAFIAAALAAPVEIGEDLFALRPTGAKRDIILMMPVCFEGEKLNKDQTKCIKA</sequence>